<sequence>MDVTKKNKRDGTEVTERIVTEIVTTRLTSLPPKGSTSNGYAKTGSLGGGSRLEKQSLTHGSSGYINSSGSIRGNASTSSYRRAHSPASTLPNSPGSTFERKTHMTRHGTYEGSSSGNSSPEYPRKELASSATRGRSQTRESEIRVRLQSASPSTRWTELDEVKRLLKGSRSASASPTRNTSSTLPIPKKGTVETKMVTASSHSVSGTYDTTALDTNLPSHMWSSTLPAGSSMGTYHNNMTTQSSSLLNTNAYSAGSVFGMPNNMASCSPTLLPGLSSCSSVFGMQNNLAPSSSVPAHGTTTAPTAYGVKKNVPQPPTVTSTGVSTSATCTTSVQSDDLLHKDCKFLILEKDNVPSKKEMELLIMTKDSGKVFTASPASVSTTSFSEDTLKKEKQAAYAADACLKADINGDLNTVSTKGKATSVENHNYDRGGGSGGGARGGGGSGGGGGGGGTWGAAPAWCPCGSCCSWWKWLLGLLLTWLLLLGLLFGLIALAEEVRKLKARVDELERTRVQYFEDKTERSSKDRLLGDMPGVGPGLGKAELDGHSQEAIWLFVRNKLMTEQENGNLRGNPGPKGDMGSQGPKGDRGLPGTAGIPGPLGHPGPEGPKGQKGSIGDPGMEGPIGQRGLEGPMGPRGEPGPPGSGEKGDRGIAGEQGPRGLPGVPGSVGPRGPNGSPGPQGPPGSTGPQGLRGEVGLPGVKGDKGLAGPPGPKGDQGEKGPRGLTGEPGVRGLPGAVGEPGAKGAMGPAGPDGQQGPRGEQGLTGMPGTRGLPGPSGDPGKPGVTGPQGPQGLPGSPGRPGTKGEPGAPGRVMTAEGSSTITVPGPPGPPGAMGPPGPSGTPGPAGPAGLPGQTKAQRGEPGLAGDSFISSGSSISEVLAAQGVDLRGPLGPPGPRGPPGPSIPGPPGPRGPPGEGVPGPPGLPGSFLTDSETFFSGPPGPPGPPGPKGDQGDPGVPGTPGIPGGHSHGESSSTTYRQGPPGPPGPPGPPGSFSSSGQDIQRYIAEYMQSDSIRTYLSGVQGPPGPPGPPGPVITITGETFDYSQLASQVVSYLRTSGYGVSLSSASSEDILAMLRRNDVWQFLRQHLVGPPGPPGPPGVGGDGSLLSLDYGELSRHILNYMSSSGISFGHPGPPGPPGLPGTSYEELLTMLRGSDYRDIIGPPGPPGPPGPRGPPGVSAALATYAAENSDNFRSELIGYLTSPDVRSFIIGPPGPPGPQGPPGDSHLRDNYSWGSSSSARRGTAYSSSVGMGGANGGSLGEGRTFGTGDGGPYGTDIGPGGGYGAAAGGIYGTDGDSFRAGFTGDLDYNKLAVRVSESMQRQGLLQGMAYTVQGPPGVPGPQGPPGISKVFSAYSNVTQDLMDFFRTHGAIPGPPGQKGEAGTPGPKGDRGLAGQRGPPGPPGPRGQKGDKGDKGDQVYTGRRRRSIAIKP</sequence>
<proteinExistence type="evidence at transcript level"/>
<protein>
    <recommendedName>
        <fullName>Collagen alpha-1(XVII) chain</fullName>
    </recommendedName>
    <alternativeName>
        <fullName>180 kDa bullous pemphigoid antigen 2</fullName>
    </alternativeName>
    <alternativeName>
        <fullName>Bullous pemphigoid antigen 2</fullName>
    </alternativeName>
    <component>
        <recommendedName>
            <fullName>120 kDa linear IgA disease antigen homolog</fullName>
        </recommendedName>
    </component>
</protein>
<comment type="function">
    <text evidence="1">May play a role in the integrity of hemidesmosome and the attachment of basal keratinocytes to the underlying basement membrane.</text>
</comment>
<comment type="function">
    <text evidence="1">The 120 kDa linear IgA disease antigen homolog is an anchoring filament component involved in dermal-epidermal cohesion.</text>
</comment>
<comment type="subunit">
    <text evidence="1">Homotrimers of alpha 1(XVII)chains. Interacts (via cytoplasmic region) with ITGB4 (via cytoplasmic region). Interacts (via cytoplasmic region) with DST (via N-terminus). Interacts (via N-terminus) with PLEC. Interacts (via cytoplasmic region) with DSP (By similarity).</text>
</comment>
<comment type="subcellular location">
    <subcellularLocation>
        <location>Cell junction</location>
        <location>Hemidesmosome</location>
    </subcellularLocation>
    <subcellularLocation>
        <location>Membrane</location>
        <topology>Single-pass type II membrane protein</topology>
    </subcellularLocation>
    <text evidence="1">Localized along the plasma membrane of the hemidesmosome.</text>
</comment>
<comment type="subcellular location">
    <molecule>120 kDa linear IgA disease antigen homolog</molecule>
    <subcellularLocation>
        <location evidence="1">Secreted</location>
        <location evidence="1">Extracellular space</location>
        <location evidence="1">Extracellular matrix</location>
        <location evidence="1">Basement membrane</location>
    </subcellularLocation>
</comment>
<comment type="PTM">
    <text evidence="1">The intracellular/endo domain is disulfide-linked.</text>
</comment>
<comment type="PTM">
    <text>Prolines at the third position of the tripeptide repeating unit (G-X-Y) are hydroxylated in some or all of the chains.</text>
</comment>
<comment type="PTM">
    <text evidence="1">The ectodomain is shedded from the surface of keratinocytes resulting in a 120-kDa soluble form, also named as 120 kDa linear IgA disease antigen homolog. The shedding is mediated by membrane-bound metalloproteases. This cleavage is inhibited by phosphorylation at Ser-547 (By similarity).</text>
</comment>
<organism>
    <name type="scientific">Mesocricetus auratus</name>
    <name type="common">Golden hamster</name>
    <dbReference type="NCBI Taxonomy" id="10036"/>
    <lineage>
        <taxon>Eukaryota</taxon>
        <taxon>Metazoa</taxon>
        <taxon>Chordata</taxon>
        <taxon>Craniata</taxon>
        <taxon>Vertebrata</taxon>
        <taxon>Euteleostomi</taxon>
        <taxon>Mammalia</taxon>
        <taxon>Eutheria</taxon>
        <taxon>Euarchontoglires</taxon>
        <taxon>Glires</taxon>
        <taxon>Rodentia</taxon>
        <taxon>Myomorpha</taxon>
        <taxon>Muroidea</taxon>
        <taxon>Cricetidae</taxon>
        <taxon>Cricetinae</taxon>
        <taxon>Mesocricetus</taxon>
    </lineage>
</organism>
<reference key="1">
    <citation type="submission" date="1999-05" db="EMBL/GenBank/DDBJ databases">
        <title>Mesocricetus auratus mRNA for type XVII collagen.</title>
        <authorList>
            <person name="Yamamoto K."/>
            <person name="Inoue N."/>
            <person name="Fujimori A."/>
            <person name="Saito T."/>
            <person name="Shinkai H."/>
            <person name="Sakiyama H."/>
        </authorList>
    </citation>
    <scope>NUCLEOTIDE SEQUENCE [MRNA]</scope>
</reference>
<name>COHA1_MESAU</name>
<evidence type="ECO:0000250" key="1"/>
<evidence type="ECO:0000250" key="2">
    <source>
        <dbReference type="UniProtKB" id="Q9UMD9"/>
    </source>
</evidence>
<evidence type="ECO:0000255" key="3"/>
<evidence type="ECO:0000256" key="4">
    <source>
        <dbReference type="SAM" id="MobiDB-lite"/>
    </source>
</evidence>
<keyword id="KW-0084">Basement membrane</keyword>
<keyword id="KW-0965">Cell junction</keyword>
<keyword id="KW-0176">Collagen</keyword>
<keyword id="KW-1015">Disulfide bond</keyword>
<keyword id="KW-0272">Extracellular matrix</keyword>
<keyword id="KW-0325">Glycoprotein</keyword>
<keyword id="KW-0379">Hydroxylation</keyword>
<keyword id="KW-0472">Membrane</keyword>
<keyword id="KW-0597">Phosphoprotein</keyword>
<keyword id="KW-1185">Reference proteome</keyword>
<keyword id="KW-0677">Repeat</keyword>
<keyword id="KW-0964">Secreted</keyword>
<keyword id="KW-0735">Signal-anchor</keyword>
<keyword id="KW-0812">Transmembrane</keyword>
<keyword id="KW-1133">Transmembrane helix</keyword>
<feature type="chain" id="PRO_0000059407" description="Collagen alpha-1(XVII) chain">
    <location>
        <begin position="1"/>
        <end position="1431"/>
    </location>
</feature>
<feature type="chain" id="PRO_0000342557" description="120 kDa linear IgA disease antigen homolog" evidence="1">
    <location>
        <begin position="527"/>
        <end position="1431"/>
    </location>
</feature>
<feature type="topological domain" description="Cytoplasmic" evidence="3">
    <location>
        <begin position="1"/>
        <end position="468"/>
    </location>
</feature>
<feature type="transmembrane region" description="Helical; Signal-anchor for type II membrane protein" evidence="3">
    <location>
        <begin position="469"/>
        <end position="489"/>
    </location>
</feature>
<feature type="topological domain" description="Extracellular" evidence="3">
    <location>
        <begin position="490"/>
        <end position="1431"/>
    </location>
</feature>
<feature type="region of interest" description="Nonhelical region (NC16)">
    <location>
        <begin position="1"/>
        <end position="569"/>
    </location>
</feature>
<feature type="region of interest" description="Disordered" evidence="4">
    <location>
        <begin position="25"/>
        <end position="155"/>
    </location>
</feature>
<feature type="region of interest" description="Necessary for interaction with DST and for the recruitment of DST to hemidesmosome" evidence="1">
    <location>
        <begin position="146"/>
        <end position="231"/>
    </location>
</feature>
<feature type="region of interest" description="Disordered" evidence="4">
    <location>
        <begin position="167"/>
        <end position="188"/>
    </location>
</feature>
<feature type="region of interest" description="Disordered" evidence="4">
    <location>
        <begin position="304"/>
        <end position="324"/>
    </location>
</feature>
<feature type="region of interest" description="Disordered" evidence="4">
    <location>
        <begin position="422"/>
        <end position="449"/>
    </location>
</feature>
<feature type="region of interest" description="Disordered" evidence="4">
    <location>
        <begin position="564"/>
        <end position="869"/>
    </location>
</feature>
<feature type="region of interest" description="Triple-helical region">
    <location>
        <begin position="570"/>
        <end position="1417"/>
    </location>
</feature>
<feature type="region of interest" description="Disordered" evidence="4">
    <location>
        <begin position="884"/>
        <end position="996"/>
    </location>
</feature>
<feature type="region of interest" description="Disordered" evidence="4">
    <location>
        <begin position="1158"/>
        <end position="1178"/>
    </location>
</feature>
<feature type="region of interest" description="Disordered" evidence="4">
    <location>
        <begin position="1208"/>
        <end position="1249"/>
    </location>
</feature>
<feature type="region of interest" description="Disordered" evidence="4">
    <location>
        <begin position="1366"/>
        <end position="1431"/>
    </location>
</feature>
<feature type="region of interest" description="Nonhelical region (NC1)">
    <location>
        <begin position="1418"/>
        <end position="1431"/>
    </location>
</feature>
<feature type="compositionally biased region" description="Low complexity" evidence="4">
    <location>
        <begin position="60"/>
        <end position="74"/>
    </location>
</feature>
<feature type="compositionally biased region" description="Polar residues" evidence="4">
    <location>
        <begin position="75"/>
        <end position="96"/>
    </location>
</feature>
<feature type="compositionally biased region" description="Polar residues" evidence="4">
    <location>
        <begin position="111"/>
        <end position="120"/>
    </location>
</feature>
<feature type="compositionally biased region" description="Polar residues" evidence="4">
    <location>
        <begin position="170"/>
        <end position="184"/>
    </location>
</feature>
<feature type="compositionally biased region" description="Gly residues" evidence="4">
    <location>
        <begin position="430"/>
        <end position="449"/>
    </location>
</feature>
<feature type="compositionally biased region" description="Low complexity" evidence="4">
    <location>
        <begin position="657"/>
        <end position="673"/>
    </location>
</feature>
<feature type="compositionally biased region" description="Low complexity" evidence="4">
    <location>
        <begin position="738"/>
        <end position="751"/>
    </location>
</feature>
<feature type="compositionally biased region" description="Low complexity" evidence="4">
    <location>
        <begin position="778"/>
        <end position="799"/>
    </location>
</feature>
<feature type="compositionally biased region" description="Pro residues" evidence="4">
    <location>
        <begin position="823"/>
        <end position="844"/>
    </location>
</feature>
<feature type="compositionally biased region" description="Pro residues" evidence="4">
    <location>
        <begin position="889"/>
        <end position="911"/>
    </location>
</feature>
<feature type="compositionally biased region" description="Pro residues" evidence="4">
    <location>
        <begin position="937"/>
        <end position="946"/>
    </location>
</feature>
<feature type="compositionally biased region" description="Pro residues" evidence="4">
    <location>
        <begin position="979"/>
        <end position="989"/>
    </location>
</feature>
<feature type="compositionally biased region" description="Pro residues" evidence="4">
    <location>
        <begin position="1162"/>
        <end position="1174"/>
    </location>
</feature>
<feature type="compositionally biased region" description="Pro residues" evidence="4">
    <location>
        <begin position="1212"/>
        <end position="1221"/>
    </location>
</feature>
<feature type="compositionally biased region" description="Polar residues" evidence="4">
    <location>
        <begin position="1232"/>
        <end position="1249"/>
    </location>
</feature>
<feature type="compositionally biased region" description="Basic and acidic residues" evidence="4">
    <location>
        <begin position="1407"/>
        <end position="1416"/>
    </location>
</feature>
<feature type="compositionally biased region" description="Basic residues" evidence="4">
    <location>
        <begin position="1421"/>
        <end position="1431"/>
    </location>
</feature>
<feature type="modified residue" description="Phosphoserine; by CK2" evidence="2">
    <location>
        <position position="547"/>
    </location>
</feature>
<feature type="glycosylation site" description="N-linked (GlcNAc...) asparagine" evidence="3">
    <location>
        <position position="1230"/>
    </location>
</feature>
<feature type="glycosylation site" description="N-linked (GlcNAc...) asparagine" evidence="3">
    <location>
        <position position="1356"/>
    </location>
</feature>
<dbReference type="EMBL" id="AB027759">
    <property type="protein sequence ID" value="BAA94381.1"/>
    <property type="molecule type" value="mRNA"/>
</dbReference>
<dbReference type="RefSeq" id="NP_001268505.1">
    <property type="nucleotide sequence ID" value="NM_001281576.1"/>
</dbReference>
<dbReference type="STRING" id="10036.ENSMAUP00000013590"/>
<dbReference type="GlyCosmos" id="Q9JMH4">
    <property type="glycosylation" value="2 sites, No reported glycans"/>
</dbReference>
<dbReference type="GeneID" id="101843802"/>
<dbReference type="KEGG" id="maua:101843802"/>
<dbReference type="CTD" id="1308"/>
<dbReference type="eggNOG" id="KOG3544">
    <property type="taxonomic scope" value="Eukaryota"/>
</dbReference>
<dbReference type="OrthoDB" id="9950082at2759"/>
<dbReference type="Proteomes" id="UP000189706">
    <property type="component" value="Unplaced"/>
</dbReference>
<dbReference type="GO" id="GO:0005604">
    <property type="term" value="C:basement membrane"/>
    <property type="evidence" value="ECO:0007669"/>
    <property type="project" value="UniProtKB-SubCell"/>
</dbReference>
<dbReference type="GO" id="GO:0005581">
    <property type="term" value="C:collagen trimer"/>
    <property type="evidence" value="ECO:0007669"/>
    <property type="project" value="UniProtKB-KW"/>
</dbReference>
<dbReference type="GO" id="GO:0005615">
    <property type="term" value="C:extracellular space"/>
    <property type="evidence" value="ECO:0007669"/>
    <property type="project" value="TreeGrafter"/>
</dbReference>
<dbReference type="GO" id="GO:0030056">
    <property type="term" value="C:hemidesmosome"/>
    <property type="evidence" value="ECO:0000250"/>
    <property type="project" value="UniProtKB"/>
</dbReference>
<dbReference type="GO" id="GO:0016020">
    <property type="term" value="C:membrane"/>
    <property type="evidence" value="ECO:0007669"/>
    <property type="project" value="UniProtKB-SubCell"/>
</dbReference>
<dbReference type="GO" id="GO:0030020">
    <property type="term" value="F:extracellular matrix structural constituent conferring tensile strength"/>
    <property type="evidence" value="ECO:0007669"/>
    <property type="project" value="TreeGrafter"/>
</dbReference>
<dbReference type="GO" id="GO:0030198">
    <property type="term" value="P:extracellular matrix organization"/>
    <property type="evidence" value="ECO:0007669"/>
    <property type="project" value="TreeGrafter"/>
</dbReference>
<dbReference type="GO" id="GO:0031581">
    <property type="term" value="P:hemidesmosome assembly"/>
    <property type="evidence" value="ECO:0000250"/>
    <property type="project" value="UniProtKB"/>
</dbReference>
<dbReference type="FunFam" id="1.20.5.320:FF:000003">
    <property type="entry name" value="Collagen, type XVII, alpha 1"/>
    <property type="match status" value="1"/>
</dbReference>
<dbReference type="Gene3D" id="1.20.5.320">
    <property type="entry name" value="6-Phosphogluconate Dehydrogenase, domain 3"/>
    <property type="match status" value="2"/>
</dbReference>
<dbReference type="InterPro" id="IPR008160">
    <property type="entry name" value="Collagen"/>
</dbReference>
<dbReference type="InterPro" id="IPR050149">
    <property type="entry name" value="Collagen_superfamily"/>
</dbReference>
<dbReference type="PANTHER" id="PTHR24023:SF1112">
    <property type="entry name" value="COL_CUTICLE_N DOMAIN-CONTAINING PROTEIN-RELATED"/>
    <property type="match status" value="1"/>
</dbReference>
<dbReference type="PANTHER" id="PTHR24023">
    <property type="entry name" value="COLLAGEN ALPHA"/>
    <property type="match status" value="1"/>
</dbReference>
<dbReference type="Pfam" id="PF01391">
    <property type="entry name" value="Collagen"/>
    <property type="match status" value="4"/>
</dbReference>
<gene>
    <name type="primary">COL17A1</name>
    <name type="synonym">BP180</name>
    <name type="synonym">BPAG2</name>
</gene>
<accession>Q9JMH4</accession>